<protein>
    <recommendedName>
        <fullName evidence="1">Large ribosomal subunit protein eL24</fullName>
    </recommendedName>
    <alternativeName>
        <fullName evidence="2">50S ribosomal protein L24e</fullName>
    </alternativeName>
</protein>
<comment type="function">
    <text evidence="1">Binds to the 23S rRNA.</text>
</comment>
<comment type="cofactor">
    <cofactor evidence="1">
        <name>Zn(2+)</name>
        <dbReference type="ChEBI" id="CHEBI:29105"/>
    </cofactor>
    <text evidence="1">Binds 1 zinc ion per subunit.</text>
</comment>
<comment type="subunit">
    <text evidence="1">Part of the 50S ribosomal subunit. Forms a cluster with proteins L3 and L14.</text>
</comment>
<comment type="similarity">
    <text evidence="1">Belongs to the eukaryotic ribosomal protein eL24 family.</text>
</comment>
<feature type="chain" id="PRO_1000017352" description="Large ribosomal subunit protein eL24">
    <location>
        <begin position="1"/>
        <end position="64"/>
    </location>
</feature>
<feature type="zinc finger region" description="C4-type" evidence="1">
    <location>
        <begin position="6"/>
        <end position="36"/>
    </location>
</feature>
<feature type="binding site" evidence="1">
    <location>
        <position position="6"/>
    </location>
    <ligand>
        <name>Zn(2+)</name>
        <dbReference type="ChEBI" id="CHEBI:29105"/>
    </ligand>
</feature>
<feature type="binding site" evidence="1">
    <location>
        <position position="9"/>
    </location>
    <ligand>
        <name>Zn(2+)</name>
        <dbReference type="ChEBI" id="CHEBI:29105"/>
    </ligand>
</feature>
<feature type="binding site" evidence="1">
    <location>
        <position position="32"/>
    </location>
    <ligand>
        <name>Zn(2+)</name>
        <dbReference type="ChEBI" id="CHEBI:29105"/>
    </ligand>
</feature>
<feature type="binding site" evidence="1">
    <location>
        <position position="36"/>
    </location>
    <ligand>
        <name>Zn(2+)</name>
        <dbReference type="ChEBI" id="CHEBI:29105"/>
    </ligand>
</feature>
<accession>A6UT49</accession>
<reference key="1">
    <citation type="submission" date="2007-06" db="EMBL/GenBank/DDBJ databases">
        <title>Complete sequence of Methanococcus aeolicus Nankai-3.</title>
        <authorList>
            <consortium name="US DOE Joint Genome Institute"/>
            <person name="Copeland A."/>
            <person name="Lucas S."/>
            <person name="Lapidus A."/>
            <person name="Barry K."/>
            <person name="Glavina del Rio T."/>
            <person name="Dalin E."/>
            <person name="Tice H."/>
            <person name="Pitluck S."/>
            <person name="Chain P."/>
            <person name="Malfatti S."/>
            <person name="Shin M."/>
            <person name="Vergez L."/>
            <person name="Schmutz J."/>
            <person name="Larimer F."/>
            <person name="Land M."/>
            <person name="Hauser L."/>
            <person name="Kyrpides N."/>
            <person name="Lykidis A."/>
            <person name="Sieprawska-Lupa M."/>
            <person name="Whitman W.B."/>
            <person name="Richardson P."/>
        </authorList>
    </citation>
    <scope>NUCLEOTIDE SEQUENCE [LARGE SCALE GENOMIC DNA]</scope>
    <source>
        <strain>ATCC BAA-1280 / DSM 17508 / OCM 812 / Nankai-3</strain>
    </source>
</reference>
<dbReference type="EMBL" id="CP000743">
    <property type="protein sequence ID" value="ABR55671.1"/>
    <property type="molecule type" value="Genomic_DNA"/>
</dbReference>
<dbReference type="RefSeq" id="WP_011972803.1">
    <property type="nucleotide sequence ID" value="NC_009635.1"/>
</dbReference>
<dbReference type="SMR" id="A6UT49"/>
<dbReference type="STRING" id="419665.Maeo_0079"/>
<dbReference type="GeneID" id="5326545"/>
<dbReference type="KEGG" id="mae:Maeo_0079"/>
<dbReference type="eggNOG" id="arCOG01950">
    <property type="taxonomic scope" value="Archaea"/>
</dbReference>
<dbReference type="HOGENOM" id="CLU_190191_0_0_2"/>
<dbReference type="OrthoDB" id="55506at2157"/>
<dbReference type="Proteomes" id="UP000001106">
    <property type="component" value="Chromosome"/>
</dbReference>
<dbReference type="GO" id="GO:1990904">
    <property type="term" value="C:ribonucleoprotein complex"/>
    <property type="evidence" value="ECO:0007669"/>
    <property type="project" value="UniProtKB-KW"/>
</dbReference>
<dbReference type="GO" id="GO:0005840">
    <property type="term" value="C:ribosome"/>
    <property type="evidence" value="ECO:0007669"/>
    <property type="project" value="UniProtKB-KW"/>
</dbReference>
<dbReference type="GO" id="GO:0019843">
    <property type="term" value="F:rRNA binding"/>
    <property type="evidence" value="ECO:0007669"/>
    <property type="project" value="UniProtKB-UniRule"/>
</dbReference>
<dbReference type="GO" id="GO:0003735">
    <property type="term" value="F:structural constituent of ribosome"/>
    <property type="evidence" value="ECO:0007669"/>
    <property type="project" value="InterPro"/>
</dbReference>
<dbReference type="GO" id="GO:0008270">
    <property type="term" value="F:zinc ion binding"/>
    <property type="evidence" value="ECO:0007669"/>
    <property type="project" value="UniProtKB-UniRule"/>
</dbReference>
<dbReference type="GO" id="GO:0006412">
    <property type="term" value="P:translation"/>
    <property type="evidence" value="ECO:0007669"/>
    <property type="project" value="UniProtKB-UniRule"/>
</dbReference>
<dbReference type="CDD" id="cd00472">
    <property type="entry name" value="Ribosomal_L24e_L24"/>
    <property type="match status" value="1"/>
</dbReference>
<dbReference type="Gene3D" id="2.30.170.20">
    <property type="entry name" value="Ribosomal protein L24e"/>
    <property type="match status" value="1"/>
</dbReference>
<dbReference type="HAMAP" id="MF_00773">
    <property type="entry name" value="Ribosomal_eL24"/>
    <property type="match status" value="1"/>
</dbReference>
<dbReference type="InterPro" id="IPR038630">
    <property type="entry name" value="L24e/L24_sf"/>
</dbReference>
<dbReference type="InterPro" id="IPR056366">
    <property type="entry name" value="Ribosomal_eL24"/>
</dbReference>
<dbReference type="InterPro" id="IPR055345">
    <property type="entry name" value="Ribosomal_eL24-rel_arc"/>
</dbReference>
<dbReference type="InterPro" id="IPR000988">
    <property type="entry name" value="Ribosomal_eL24-rel_N"/>
</dbReference>
<dbReference type="InterPro" id="IPR023442">
    <property type="entry name" value="Ribosomal_eL24_CS"/>
</dbReference>
<dbReference type="InterPro" id="IPR011017">
    <property type="entry name" value="TRASH_dom"/>
</dbReference>
<dbReference type="NCBIfam" id="NF034186">
    <property type="entry name" value="PRK14891.1-1"/>
    <property type="match status" value="1"/>
</dbReference>
<dbReference type="PANTHER" id="PTHR10792">
    <property type="entry name" value="60S RIBOSOMAL PROTEIN L24"/>
    <property type="match status" value="1"/>
</dbReference>
<dbReference type="PANTHER" id="PTHR10792:SF1">
    <property type="entry name" value="RIBOSOMAL PROTEIN L24"/>
    <property type="match status" value="1"/>
</dbReference>
<dbReference type="Pfam" id="PF01246">
    <property type="entry name" value="Ribosomal_L24e"/>
    <property type="match status" value="1"/>
</dbReference>
<dbReference type="SMART" id="SM00746">
    <property type="entry name" value="TRASH"/>
    <property type="match status" value="1"/>
</dbReference>
<dbReference type="SUPFAM" id="SSF57716">
    <property type="entry name" value="Glucocorticoid receptor-like (DNA-binding domain)"/>
    <property type="match status" value="1"/>
</dbReference>
<dbReference type="PROSITE" id="PS01073">
    <property type="entry name" value="RIBOSOMAL_L24E"/>
    <property type="match status" value="1"/>
</dbReference>
<evidence type="ECO:0000255" key="1">
    <source>
        <dbReference type="HAMAP-Rule" id="MF_00773"/>
    </source>
</evidence>
<evidence type="ECO:0000305" key="2"/>
<organism>
    <name type="scientific">Methanococcus aeolicus (strain ATCC BAA-1280 / DSM 17508 / OCM 812 / Nankai-3)</name>
    <dbReference type="NCBI Taxonomy" id="419665"/>
    <lineage>
        <taxon>Archaea</taxon>
        <taxon>Methanobacteriati</taxon>
        <taxon>Methanobacteriota</taxon>
        <taxon>Methanomada group</taxon>
        <taxon>Methanococci</taxon>
        <taxon>Methanococcales</taxon>
        <taxon>Methanococcaceae</taxon>
        <taxon>Methanococcus</taxon>
    </lineage>
</organism>
<sequence>MEWKTCNFCGKSIEPGTGKKFVKKDGSVMFICSSKCEKNYKLKRVARKLRWTPIYYNNKHSNKK</sequence>
<gene>
    <name evidence="1" type="primary">rpl24e</name>
    <name type="ordered locus">Maeo_0079</name>
</gene>
<proteinExistence type="inferred from homology"/>
<keyword id="KW-0479">Metal-binding</keyword>
<keyword id="KW-0687">Ribonucleoprotein</keyword>
<keyword id="KW-0689">Ribosomal protein</keyword>
<keyword id="KW-0694">RNA-binding</keyword>
<keyword id="KW-0699">rRNA-binding</keyword>
<keyword id="KW-0862">Zinc</keyword>
<keyword id="KW-0863">Zinc-finger</keyword>
<name>RL24E_META3</name>